<accession>B1VKH0</accession>
<gene>
    <name evidence="2" type="primary">psbD</name>
</gene>
<proteinExistence type="inferred from homology"/>
<comment type="function">
    <text evidence="2">Photosystem II (PSII) is a light-driven water:plastoquinone oxidoreductase that uses light energy to abstract electrons from H(2)O, generating O(2) and a proton gradient subsequently used for ATP formation. It consists of a core antenna complex that captures photons, and an electron transfer chain that converts photonic excitation into a charge separation. The D1/D2 (PsbA/PsbD) reaction center heterodimer binds P680, the primary electron donor of PSII as well as several subsequent electron acceptors. D2 is needed for assembly of a stable PSII complex.</text>
</comment>
<comment type="catalytic activity">
    <reaction evidence="2">
        <text>2 a plastoquinone + 4 hnu + 2 H2O = 2 a plastoquinol + O2</text>
        <dbReference type="Rhea" id="RHEA:36359"/>
        <dbReference type="Rhea" id="RHEA-COMP:9561"/>
        <dbReference type="Rhea" id="RHEA-COMP:9562"/>
        <dbReference type="ChEBI" id="CHEBI:15377"/>
        <dbReference type="ChEBI" id="CHEBI:15379"/>
        <dbReference type="ChEBI" id="CHEBI:17757"/>
        <dbReference type="ChEBI" id="CHEBI:30212"/>
        <dbReference type="ChEBI" id="CHEBI:62192"/>
        <dbReference type="EC" id="1.10.3.9"/>
    </reaction>
</comment>
<comment type="cofactor">
    <text evidence="2">The D1/D2 heterodimer binds P680, chlorophylls that are the primary electron donor of PSII, and subsequent electron acceptors. It shares a non-heme iron and each subunit binds pheophytin, quinone, additional chlorophylls, carotenoids and lipids. There is also a Cl(-1) ion associated with D1 and D2, which is required for oxygen evolution. The PSII complex binds additional chlorophylls, carotenoids and specific lipids.</text>
</comment>
<comment type="subunit">
    <text evidence="2">PSII is composed of 1 copy each of membrane proteins PsbA, PsbB, PsbC, PsbD, PsbE, PsbF, PsbH, PsbI, PsbJ, PsbK, PsbL, PsbM, PsbT, PsbX, PsbY, PsbZ, Psb30/Ycf12, at least 3 peripheral proteins of the oxygen-evolving complex and a large number of cofactors. It forms dimeric complexes.</text>
</comment>
<comment type="subcellular location">
    <subcellularLocation>
        <location evidence="2">Plastid</location>
        <location evidence="2">Chloroplast thylakoid membrane</location>
        <topology evidence="2">Multi-pass membrane protein</topology>
    </subcellularLocation>
</comment>
<comment type="miscellaneous">
    <text evidence="2">2 of the reaction center chlorophylls (ChlD1 and ChlD2) are entirely coordinated by water.</text>
</comment>
<comment type="similarity">
    <text evidence="2">Belongs to the reaction center PufL/M/PsbA/D family.</text>
</comment>
<keyword id="KW-0007">Acetylation</keyword>
<keyword id="KW-0148">Chlorophyll</keyword>
<keyword id="KW-0150">Chloroplast</keyword>
<keyword id="KW-0157">Chromophore</keyword>
<keyword id="KW-0249">Electron transport</keyword>
<keyword id="KW-0408">Iron</keyword>
<keyword id="KW-0460">Magnesium</keyword>
<keyword id="KW-0472">Membrane</keyword>
<keyword id="KW-0479">Metal-binding</keyword>
<keyword id="KW-0560">Oxidoreductase</keyword>
<keyword id="KW-0597">Phosphoprotein</keyword>
<keyword id="KW-0602">Photosynthesis</keyword>
<keyword id="KW-0604">Photosystem II</keyword>
<keyword id="KW-0934">Plastid</keyword>
<keyword id="KW-0793">Thylakoid</keyword>
<keyword id="KW-0812">Transmembrane</keyword>
<keyword id="KW-1133">Transmembrane helix</keyword>
<keyword id="KW-0813">Transport</keyword>
<organism>
    <name type="scientific">Cryptomeria japonica</name>
    <name type="common">Japanese cedar</name>
    <name type="synonym">Cupressus japonica</name>
    <dbReference type="NCBI Taxonomy" id="3369"/>
    <lineage>
        <taxon>Eukaryota</taxon>
        <taxon>Viridiplantae</taxon>
        <taxon>Streptophyta</taxon>
        <taxon>Embryophyta</taxon>
        <taxon>Tracheophyta</taxon>
        <taxon>Spermatophyta</taxon>
        <taxon>Pinopsida</taxon>
        <taxon>Pinidae</taxon>
        <taxon>Conifers II</taxon>
        <taxon>Cupressales</taxon>
        <taxon>Cupressaceae</taxon>
        <taxon>Cryptomeria</taxon>
    </lineage>
</organism>
<geneLocation type="chloroplast"/>
<reference key="1">
    <citation type="journal article" date="2008" name="BMC Plant Biol.">
        <title>Complete nucleotide sequence of the Cryptomeria japonica D. Don. chloroplast genome and comparative chloroplast genomics: diversified genomic structure of coniferous species.</title>
        <authorList>
            <person name="Hirao T."/>
            <person name="Watanabe A."/>
            <person name="Kurita M."/>
            <person name="Kondo T."/>
            <person name="Takata K."/>
        </authorList>
    </citation>
    <scope>NUCLEOTIDE SEQUENCE [LARGE SCALE GENOMIC DNA]</scope>
</reference>
<evidence type="ECO:0000250" key="1">
    <source>
        <dbReference type="UniProtKB" id="P56761"/>
    </source>
</evidence>
<evidence type="ECO:0000255" key="2">
    <source>
        <dbReference type="HAMAP-Rule" id="MF_01383"/>
    </source>
</evidence>
<feature type="initiator methionine" description="Removed" evidence="1">
    <location>
        <position position="1"/>
    </location>
</feature>
<feature type="chain" id="PRO_0000359639" description="Photosystem II D2 protein">
    <location>
        <begin position="2"/>
        <end position="353"/>
    </location>
</feature>
<feature type="transmembrane region" description="Helical" evidence="2">
    <location>
        <begin position="41"/>
        <end position="61"/>
    </location>
</feature>
<feature type="transmembrane region" description="Helical" evidence="2">
    <location>
        <begin position="125"/>
        <end position="141"/>
    </location>
</feature>
<feature type="transmembrane region" description="Helical" evidence="2">
    <location>
        <begin position="153"/>
        <end position="166"/>
    </location>
</feature>
<feature type="transmembrane region" description="Helical" evidence="2">
    <location>
        <begin position="208"/>
        <end position="228"/>
    </location>
</feature>
<feature type="transmembrane region" description="Helical" evidence="2">
    <location>
        <begin position="279"/>
        <end position="295"/>
    </location>
</feature>
<feature type="binding site" description="axial binding residue" evidence="2">
    <location>
        <position position="118"/>
    </location>
    <ligand>
        <name>chlorophyll a</name>
        <dbReference type="ChEBI" id="CHEBI:58416"/>
        <label>ChlzD2</label>
    </ligand>
    <ligandPart>
        <name>Mg</name>
        <dbReference type="ChEBI" id="CHEBI:25107"/>
    </ligandPart>
</feature>
<feature type="binding site" evidence="2">
    <location>
        <position position="130"/>
    </location>
    <ligand>
        <name>pheophytin a</name>
        <dbReference type="ChEBI" id="CHEBI:136840"/>
        <label>D2</label>
    </ligand>
</feature>
<feature type="binding site" evidence="2">
    <location>
        <position position="143"/>
    </location>
    <ligand>
        <name>pheophytin a</name>
        <dbReference type="ChEBI" id="CHEBI:136840"/>
        <label>D2</label>
    </ligand>
</feature>
<feature type="binding site" description="axial binding residue" evidence="2">
    <location>
        <position position="198"/>
    </location>
    <ligand>
        <name>chlorophyll a</name>
        <dbReference type="ChEBI" id="CHEBI:58416"/>
        <label>PD2</label>
    </ligand>
    <ligandPart>
        <name>Mg</name>
        <dbReference type="ChEBI" id="CHEBI:25107"/>
    </ligandPart>
</feature>
<feature type="binding site" evidence="2">
    <location>
        <position position="215"/>
    </location>
    <ligand>
        <name>a plastoquinone</name>
        <dbReference type="ChEBI" id="CHEBI:17757"/>
        <label>Q(A)</label>
    </ligand>
</feature>
<feature type="binding site" evidence="2">
    <location>
        <position position="215"/>
    </location>
    <ligand>
        <name>Fe cation</name>
        <dbReference type="ChEBI" id="CHEBI:24875"/>
        <note>ligand shared with heterodimeric partner</note>
    </ligand>
</feature>
<feature type="binding site" evidence="2">
    <location>
        <position position="262"/>
    </location>
    <ligand>
        <name>a plastoquinone</name>
        <dbReference type="ChEBI" id="CHEBI:17757"/>
        <label>Q(A)</label>
    </ligand>
</feature>
<feature type="binding site" evidence="2">
    <location>
        <position position="269"/>
    </location>
    <ligand>
        <name>Fe cation</name>
        <dbReference type="ChEBI" id="CHEBI:24875"/>
        <note>ligand shared with heterodimeric partner</note>
    </ligand>
</feature>
<feature type="modified residue" description="N-acetylthreonine" evidence="1">
    <location>
        <position position="2"/>
    </location>
</feature>
<feature type="modified residue" description="Phosphothreonine" evidence="1">
    <location>
        <position position="2"/>
    </location>
</feature>
<name>PSBD_CRYJA</name>
<dbReference type="EC" id="1.10.3.9" evidence="2"/>
<dbReference type="EMBL" id="AP009377">
    <property type="protein sequence ID" value="BAG16681.1"/>
    <property type="molecule type" value="Genomic_DNA"/>
</dbReference>
<dbReference type="RefSeq" id="YP_001806683.1">
    <property type="nucleotide sequence ID" value="NC_010548.1"/>
</dbReference>
<dbReference type="SMR" id="B1VKH0"/>
<dbReference type="GeneID" id="6166580"/>
<dbReference type="KEGG" id="cjf:6166580"/>
<dbReference type="OrthoDB" id="34776at2759"/>
<dbReference type="GO" id="GO:0009535">
    <property type="term" value="C:chloroplast thylakoid membrane"/>
    <property type="evidence" value="ECO:0007669"/>
    <property type="project" value="UniProtKB-SubCell"/>
</dbReference>
<dbReference type="GO" id="GO:0009523">
    <property type="term" value="C:photosystem II"/>
    <property type="evidence" value="ECO:0007669"/>
    <property type="project" value="UniProtKB-KW"/>
</dbReference>
<dbReference type="GO" id="GO:0016168">
    <property type="term" value="F:chlorophyll binding"/>
    <property type="evidence" value="ECO:0007669"/>
    <property type="project" value="UniProtKB-UniRule"/>
</dbReference>
<dbReference type="GO" id="GO:0045156">
    <property type="term" value="F:electron transporter, transferring electrons within the cyclic electron transport pathway of photosynthesis activity"/>
    <property type="evidence" value="ECO:0007669"/>
    <property type="project" value="InterPro"/>
</dbReference>
<dbReference type="GO" id="GO:0005506">
    <property type="term" value="F:iron ion binding"/>
    <property type="evidence" value="ECO:0007669"/>
    <property type="project" value="UniProtKB-UniRule"/>
</dbReference>
<dbReference type="GO" id="GO:0010242">
    <property type="term" value="F:oxygen evolving activity"/>
    <property type="evidence" value="ECO:0007669"/>
    <property type="project" value="UniProtKB-EC"/>
</dbReference>
<dbReference type="GO" id="GO:0009772">
    <property type="term" value="P:photosynthetic electron transport in photosystem II"/>
    <property type="evidence" value="ECO:0007669"/>
    <property type="project" value="InterPro"/>
</dbReference>
<dbReference type="CDD" id="cd09288">
    <property type="entry name" value="Photosystem-II_D2"/>
    <property type="match status" value="1"/>
</dbReference>
<dbReference type="FunFam" id="1.20.85.10:FF:000001">
    <property type="entry name" value="photosystem II D2 protein-like"/>
    <property type="match status" value="1"/>
</dbReference>
<dbReference type="Gene3D" id="1.20.85.10">
    <property type="entry name" value="Photosystem II protein D1-like"/>
    <property type="match status" value="1"/>
</dbReference>
<dbReference type="HAMAP" id="MF_01383">
    <property type="entry name" value="PSII_PsbD_D2"/>
    <property type="match status" value="1"/>
</dbReference>
<dbReference type="InterPro" id="IPR055266">
    <property type="entry name" value="D1/D2"/>
</dbReference>
<dbReference type="InterPro" id="IPR036854">
    <property type="entry name" value="Photo_II_D1/D2_sf"/>
</dbReference>
<dbReference type="InterPro" id="IPR000484">
    <property type="entry name" value="Photo_RC_L/M"/>
</dbReference>
<dbReference type="InterPro" id="IPR055265">
    <property type="entry name" value="Photo_RC_L/M_CS"/>
</dbReference>
<dbReference type="InterPro" id="IPR005868">
    <property type="entry name" value="PSII_PsbD/D2"/>
</dbReference>
<dbReference type="NCBIfam" id="TIGR01152">
    <property type="entry name" value="psbD"/>
    <property type="match status" value="1"/>
</dbReference>
<dbReference type="PANTHER" id="PTHR33149:SF12">
    <property type="entry name" value="PHOTOSYSTEM II D2 PROTEIN"/>
    <property type="match status" value="1"/>
</dbReference>
<dbReference type="PANTHER" id="PTHR33149">
    <property type="entry name" value="PHOTOSYSTEM II PROTEIN D1"/>
    <property type="match status" value="1"/>
</dbReference>
<dbReference type="Pfam" id="PF00124">
    <property type="entry name" value="Photo_RC"/>
    <property type="match status" value="1"/>
</dbReference>
<dbReference type="PRINTS" id="PR00256">
    <property type="entry name" value="REACTNCENTRE"/>
</dbReference>
<dbReference type="SUPFAM" id="SSF81483">
    <property type="entry name" value="Bacterial photosystem II reaction centre, L and M subunits"/>
    <property type="match status" value="1"/>
</dbReference>
<dbReference type="PROSITE" id="PS00244">
    <property type="entry name" value="REACTION_CENTER"/>
    <property type="match status" value="1"/>
</dbReference>
<protein>
    <recommendedName>
        <fullName evidence="2">Photosystem II D2 protein</fullName>
        <shortName evidence="2">PSII D2 protein</shortName>
        <ecNumber evidence="2">1.10.3.9</ecNumber>
    </recommendedName>
    <alternativeName>
        <fullName evidence="2">Photosystem Q(A) protein</fullName>
    </alternativeName>
</protein>
<sequence length="353" mass="39473">MTIALGKSSKEEQTLFDIMDDWLRRDRFVFVGWSGLLLFPCAYFALGGWFTGTTFVTSWYTHGLASSYLEGCNFLTAAVSTPANSLAHSLLLLWGPEAQGDFTRWCQLGGLWAFVALHGAFGLIGFMLRQFELARSVQLRPYNAIAFSAPIAVFVSVFLIYPLGQSGWFFAPSFGVAAIFRFILFFQGFHNWTLNPFHMMGVAGVLGAALLCAIHGATVENTLFEDGDGANTFRAFNPTQAEETYSMVTANRFWSQIFGVAFSNKRWLHFFMLFVPVTGLWMSAIGVVGLALNLRAYDFVSQEIRAAEDPEFETFYTKNILLNEGIRAWMAAQDQPHENLIFPEEVLPRGNAL</sequence>